<protein>
    <recommendedName>
        <fullName evidence="1">Protein-glutamate methylesterase/protein-glutamine glutaminase 3</fullName>
        <ecNumber evidence="1">3.1.1.61</ecNumber>
        <ecNumber evidence="1">3.5.1.44</ecNumber>
    </recommendedName>
</protein>
<dbReference type="EC" id="3.1.1.61" evidence="1"/>
<dbReference type="EC" id="3.5.1.44" evidence="1"/>
<dbReference type="EMBL" id="CP000075">
    <property type="protein sequence ID" value="AAY38465.1"/>
    <property type="molecule type" value="Genomic_DNA"/>
</dbReference>
<dbReference type="RefSeq" id="WP_011268432.1">
    <property type="nucleotide sequence ID" value="NC_007005.1"/>
</dbReference>
<dbReference type="RefSeq" id="YP_236503.1">
    <property type="nucleotide sequence ID" value="NC_007005.1"/>
</dbReference>
<dbReference type="SMR" id="Q4ZQV7"/>
<dbReference type="STRING" id="205918.Psyr_3433"/>
<dbReference type="KEGG" id="psb:Psyr_3433"/>
<dbReference type="PATRIC" id="fig|205918.7.peg.3516"/>
<dbReference type="eggNOG" id="COG2201">
    <property type="taxonomic scope" value="Bacteria"/>
</dbReference>
<dbReference type="HOGENOM" id="CLU_000445_51_0_6"/>
<dbReference type="OrthoDB" id="9793421at2"/>
<dbReference type="Proteomes" id="UP000000426">
    <property type="component" value="Chromosome"/>
</dbReference>
<dbReference type="GO" id="GO:0005737">
    <property type="term" value="C:cytoplasm"/>
    <property type="evidence" value="ECO:0007669"/>
    <property type="project" value="UniProtKB-SubCell"/>
</dbReference>
<dbReference type="GO" id="GO:0000156">
    <property type="term" value="F:phosphorelay response regulator activity"/>
    <property type="evidence" value="ECO:0007669"/>
    <property type="project" value="InterPro"/>
</dbReference>
<dbReference type="GO" id="GO:0008984">
    <property type="term" value="F:protein-glutamate methylesterase activity"/>
    <property type="evidence" value="ECO:0007669"/>
    <property type="project" value="UniProtKB-UniRule"/>
</dbReference>
<dbReference type="GO" id="GO:0050568">
    <property type="term" value="F:protein-glutamine glutaminase activity"/>
    <property type="evidence" value="ECO:0007669"/>
    <property type="project" value="UniProtKB-UniRule"/>
</dbReference>
<dbReference type="GO" id="GO:0006935">
    <property type="term" value="P:chemotaxis"/>
    <property type="evidence" value="ECO:0007669"/>
    <property type="project" value="UniProtKB-UniRule"/>
</dbReference>
<dbReference type="CDD" id="cd16432">
    <property type="entry name" value="CheB_Rec"/>
    <property type="match status" value="1"/>
</dbReference>
<dbReference type="CDD" id="cd17541">
    <property type="entry name" value="REC_CheB-like"/>
    <property type="match status" value="1"/>
</dbReference>
<dbReference type="FunFam" id="3.40.50.2300:FF:000077">
    <property type="entry name" value="Chemotaxis response regulator"/>
    <property type="match status" value="1"/>
</dbReference>
<dbReference type="FunFam" id="3.40.50.180:FF:000001">
    <property type="entry name" value="Protein-glutamate methylesterase/protein-glutamine glutaminase"/>
    <property type="match status" value="1"/>
</dbReference>
<dbReference type="Gene3D" id="3.40.50.2300">
    <property type="match status" value="1"/>
</dbReference>
<dbReference type="Gene3D" id="3.40.50.180">
    <property type="entry name" value="Methylesterase CheB, C-terminal domain"/>
    <property type="match status" value="1"/>
</dbReference>
<dbReference type="HAMAP" id="MF_00099">
    <property type="entry name" value="CheB_chemtxs"/>
    <property type="match status" value="1"/>
</dbReference>
<dbReference type="InterPro" id="IPR008248">
    <property type="entry name" value="CheB-like"/>
</dbReference>
<dbReference type="InterPro" id="IPR035909">
    <property type="entry name" value="CheB_C"/>
</dbReference>
<dbReference type="InterPro" id="IPR011006">
    <property type="entry name" value="CheY-like_superfamily"/>
</dbReference>
<dbReference type="InterPro" id="IPR000673">
    <property type="entry name" value="Sig_transdc_resp-reg_Me-estase"/>
</dbReference>
<dbReference type="InterPro" id="IPR001789">
    <property type="entry name" value="Sig_transdc_resp-reg_receiver"/>
</dbReference>
<dbReference type="NCBIfam" id="NF001965">
    <property type="entry name" value="PRK00742.1"/>
    <property type="match status" value="1"/>
</dbReference>
<dbReference type="PANTHER" id="PTHR42872">
    <property type="entry name" value="PROTEIN-GLUTAMATE METHYLESTERASE/PROTEIN-GLUTAMINE GLUTAMINASE"/>
    <property type="match status" value="1"/>
</dbReference>
<dbReference type="PANTHER" id="PTHR42872:SF3">
    <property type="entry name" value="PROTEIN-GLUTAMATE METHYLESTERASE_PROTEIN-GLUTAMINE GLUTAMINASE 1"/>
    <property type="match status" value="1"/>
</dbReference>
<dbReference type="Pfam" id="PF01339">
    <property type="entry name" value="CheB_methylest"/>
    <property type="match status" value="1"/>
</dbReference>
<dbReference type="Pfam" id="PF00072">
    <property type="entry name" value="Response_reg"/>
    <property type="match status" value="1"/>
</dbReference>
<dbReference type="PIRSF" id="PIRSF000876">
    <property type="entry name" value="RR_chemtxs_CheB"/>
    <property type="match status" value="1"/>
</dbReference>
<dbReference type="SMART" id="SM00448">
    <property type="entry name" value="REC"/>
    <property type="match status" value="1"/>
</dbReference>
<dbReference type="SUPFAM" id="SSF52172">
    <property type="entry name" value="CheY-like"/>
    <property type="match status" value="1"/>
</dbReference>
<dbReference type="SUPFAM" id="SSF52738">
    <property type="entry name" value="Methylesterase CheB, C-terminal domain"/>
    <property type="match status" value="1"/>
</dbReference>
<dbReference type="PROSITE" id="PS50122">
    <property type="entry name" value="CHEB"/>
    <property type="match status" value="1"/>
</dbReference>
<dbReference type="PROSITE" id="PS50110">
    <property type="entry name" value="RESPONSE_REGULATORY"/>
    <property type="match status" value="1"/>
</dbReference>
<gene>
    <name evidence="1" type="primary">cheB3</name>
    <name type="ordered locus">Psyr_3433</name>
</gene>
<organism>
    <name type="scientific">Pseudomonas syringae pv. syringae (strain B728a)</name>
    <dbReference type="NCBI Taxonomy" id="205918"/>
    <lineage>
        <taxon>Bacteria</taxon>
        <taxon>Pseudomonadati</taxon>
        <taxon>Pseudomonadota</taxon>
        <taxon>Gammaproteobacteria</taxon>
        <taxon>Pseudomonadales</taxon>
        <taxon>Pseudomonadaceae</taxon>
        <taxon>Pseudomonas</taxon>
        <taxon>Pseudomonas syringae</taxon>
    </lineage>
</organism>
<accession>Q4ZQV7</accession>
<reference key="1">
    <citation type="journal article" date="2005" name="Proc. Natl. Acad. Sci. U.S.A.">
        <title>Comparison of the complete genome sequences of Pseudomonas syringae pv. syringae B728a and pv. tomato DC3000.</title>
        <authorList>
            <person name="Feil H."/>
            <person name="Feil W.S."/>
            <person name="Chain P."/>
            <person name="Larimer F."/>
            <person name="Dibartolo G."/>
            <person name="Copeland A."/>
            <person name="Lykidis A."/>
            <person name="Trong S."/>
            <person name="Nolan M."/>
            <person name="Goltsman E."/>
            <person name="Thiel J."/>
            <person name="Malfatti S."/>
            <person name="Loper J.E."/>
            <person name="Lapidus A."/>
            <person name="Detter J.C."/>
            <person name="Land M."/>
            <person name="Richardson P.M."/>
            <person name="Kyrpides N.C."/>
            <person name="Ivanova N."/>
            <person name="Lindow S.E."/>
        </authorList>
    </citation>
    <scope>NUCLEOTIDE SEQUENCE [LARGE SCALE GENOMIC DNA]</scope>
    <source>
        <strain>B728a</strain>
    </source>
</reference>
<name>CHEB3_PSEU2</name>
<proteinExistence type="inferred from homology"/>
<comment type="function">
    <text evidence="1">Involved in chemotaxis. Part of a chemotaxis signal transduction system that modulates chemotaxis in response to various stimuli. Catalyzes the demethylation of specific methylglutamate residues introduced into the chemoreceptors (methyl-accepting chemotaxis proteins or MCP) by CheR. Also mediates the irreversible deamidation of specific glutamine residues to glutamic acid.</text>
</comment>
<comment type="catalytic activity">
    <reaction evidence="1">
        <text>[protein]-L-glutamate 5-O-methyl ester + H2O = L-glutamyl-[protein] + methanol + H(+)</text>
        <dbReference type="Rhea" id="RHEA:23236"/>
        <dbReference type="Rhea" id="RHEA-COMP:10208"/>
        <dbReference type="Rhea" id="RHEA-COMP:10311"/>
        <dbReference type="ChEBI" id="CHEBI:15377"/>
        <dbReference type="ChEBI" id="CHEBI:15378"/>
        <dbReference type="ChEBI" id="CHEBI:17790"/>
        <dbReference type="ChEBI" id="CHEBI:29973"/>
        <dbReference type="ChEBI" id="CHEBI:82795"/>
        <dbReference type="EC" id="3.1.1.61"/>
    </reaction>
</comment>
<comment type="catalytic activity">
    <reaction evidence="1">
        <text>L-glutaminyl-[protein] + H2O = L-glutamyl-[protein] + NH4(+)</text>
        <dbReference type="Rhea" id="RHEA:16441"/>
        <dbReference type="Rhea" id="RHEA-COMP:10207"/>
        <dbReference type="Rhea" id="RHEA-COMP:10208"/>
        <dbReference type="ChEBI" id="CHEBI:15377"/>
        <dbReference type="ChEBI" id="CHEBI:28938"/>
        <dbReference type="ChEBI" id="CHEBI:29973"/>
        <dbReference type="ChEBI" id="CHEBI:30011"/>
        <dbReference type="EC" id="3.5.1.44"/>
    </reaction>
</comment>
<comment type="subcellular location">
    <subcellularLocation>
        <location evidence="1">Cytoplasm</location>
    </subcellularLocation>
</comment>
<comment type="domain">
    <text evidence="1">Contains a C-terminal catalytic domain, and an N-terminal region which modulates catalytic activity.</text>
</comment>
<comment type="PTM">
    <text evidence="1">Phosphorylated by CheA. Phosphorylation of the N-terminal regulatory domain activates the methylesterase activity.</text>
</comment>
<comment type="similarity">
    <text evidence="1">Belongs to the CheB family.</text>
</comment>
<feature type="chain" id="PRO_0000225478" description="Protein-glutamate methylesterase/protein-glutamine glutaminase 3">
    <location>
        <begin position="1"/>
        <end position="386"/>
    </location>
</feature>
<feature type="domain" description="Response regulatory" evidence="1">
    <location>
        <begin position="4"/>
        <end position="121"/>
    </location>
</feature>
<feature type="domain" description="CheB-type methylesterase" evidence="1">
    <location>
        <begin position="191"/>
        <end position="383"/>
    </location>
</feature>
<feature type="region of interest" description="Disordered" evidence="2">
    <location>
        <begin position="132"/>
        <end position="197"/>
    </location>
</feature>
<feature type="compositionally biased region" description="Low complexity" evidence="2">
    <location>
        <begin position="132"/>
        <end position="194"/>
    </location>
</feature>
<feature type="active site" evidence="1">
    <location>
        <position position="210"/>
    </location>
</feature>
<feature type="active site" evidence="1">
    <location>
        <position position="237"/>
    </location>
</feature>
<feature type="active site" evidence="1">
    <location>
        <position position="330"/>
    </location>
</feature>
<feature type="modified residue" description="4-aspartylphosphate" evidence="1">
    <location>
        <position position="55"/>
    </location>
</feature>
<evidence type="ECO:0000255" key="1">
    <source>
        <dbReference type="HAMAP-Rule" id="MF_00099"/>
    </source>
</evidence>
<evidence type="ECO:0000256" key="2">
    <source>
        <dbReference type="SAM" id="MobiDB-lite"/>
    </source>
</evidence>
<keyword id="KW-0145">Chemotaxis</keyword>
<keyword id="KW-0963">Cytoplasm</keyword>
<keyword id="KW-0378">Hydrolase</keyword>
<keyword id="KW-0597">Phosphoprotein</keyword>
<sequence>MAVKVLVVDDSGFFRRRVTEILSSDPNIVVVGTATNGKEAIEQALALKPDVITMDYEMPMMDGITAVRHIMQRIPTPVLMFSSLTHEGARVTLDALDAGAVDFLPKNFEDISRNPQKVKQLLCEKINSISRSNRRSSGFGSASAAPAAPAPSTLSSRASAPAPAPARAVPSRTATPAAAPAAPTSHAPAHPTTSGTAKRKAYKLVAIGTSTGGPVALQRVLTQLPANFPAPLVLIQHMPAAFTKAFAERLDKLCKISVKEAEDGDVLRPGLALLAPGGKQMMVDGRGTVKILPGDERLNYKPCVDITFGSAAKSYGDKVLSVVLTGMGADGREGARLLKQAGSTVWAQDEASCVIYGMPMAIVKAELADAIYSLDDIGRHLVEACL</sequence>